<feature type="chain" id="PRO_1000074162" description="Phosphate acyltransferase">
    <location>
        <begin position="1"/>
        <end position="343"/>
    </location>
</feature>
<reference key="1">
    <citation type="journal article" date="2009" name="Infect. Immun.">
        <title>Comparative genomics reveal extensive transposon-mediated genomic plasticity and diversity among potential effector proteins within the genus Coxiella.</title>
        <authorList>
            <person name="Beare P.A."/>
            <person name="Unsworth N."/>
            <person name="Andoh M."/>
            <person name="Voth D.E."/>
            <person name="Omsland A."/>
            <person name="Gilk S.D."/>
            <person name="Williams K.P."/>
            <person name="Sobral B.W."/>
            <person name="Kupko J.J. III"/>
            <person name="Porcella S.F."/>
            <person name="Samuel J.E."/>
            <person name="Heinzen R.A."/>
        </authorList>
    </citation>
    <scope>NUCLEOTIDE SEQUENCE [LARGE SCALE GENOMIC DNA]</scope>
    <source>
        <strain>Dugway 5J108-111</strain>
    </source>
</reference>
<sequence>MLKTIALDAMGGDHGPKVIVPAALSILKKHPKVKLILVGKEDQLALLIPEKNRKSFGQRLEIIHASEEVGMDEPPSQALRTKKNSSMRVAINLVKEGQAHACVSAGNTGALMATARYVLKTLPGIDRPAIIAAFPTKNEREVRVLDLGANVDSTPENLYQFAVMGSILSSAAHNIRNPRIGLLNVGEEEIKGNELVKKANELFETRKTINYIGYVEGNTIFNNIADVVVCDGFVGNAVLKASEGVAQLIKQHAKEAFSEAWWTKLALLPAIPILKRLIRRVDPERYNGATFLGLNGIVVKSHGSANIKAFVCAVEEAIFQVDKNIPQLIKEEVAHILKEFENK</sequence>
<organism>
    <name type="scientific">Coxiella burnetii (strain Dugway 5J108-111)</name>
    <dbReference type="NCBI Taxonomy" id="434922"/>
    <lineage>
        <taxon>Bacteria</taxon>
        <taxon>Pseudomonadati</taxon>
        <taxon>Pseudomonadota</taxon>
        <taxon>Gammaproteobacteria</taxon>
        <taxon>Legionellales</taxon>
        <taxon>Coxiellaceae</taxon>
        <taxon>Coxiella</taxon>
    </lineage>
</organism>
<dbReference type="EC" id="2.3.1.274" evidence="1"/>
<dbReference type="EMBL" id="CP000733">
    <property type="protein sequence ID" value="ABS78280.1"/>
    <property type="molecule type" value="Genomic_DNA"/>
</dbReference>
<dbReference type="RefSeq" id="WP_005771274.1">
    <property type="nucleotide sequence ID" value="NC_009727.1"/>
</dbReference>
<dbReference type="SMR" id="A9KEA2"/>
<dbReference type="KEGG" id="cbd:CBUD_1584"/>
<dbReference type="HOGENOM" id="CLU_039379_1_0_6"/>
<dbReference type="UniPathway" id="UPA00085"/>
<dbReference type="Proteomes" id="UP000008555">
    <property type="component" value="Chromosome"/>
</dbReference>
<dbReference type="GO" id="GO:0005737">
    <property type="term" value="C:cytoplasm"/>
    <property type="evidence" value="ECO:0007669"/>
    <property type="project" value="UniProtKB-SubCell"/>
</dbReference>
<dbReference type="GO" id="GO:0043811">
    <property type="term" value="F:phosphate:acyl-[acyl carrier protein] acyltransferase activity"/>
    <property type="evidence" value="ECO:0007669"/>
    <property type="project" value="UniProtKB-UniRule"/>
</dbReference>
<dbReference type="GO" id="GO:0006633">
    <property type="term" value="P:fatty acid biosynthetic process"/>
    <property type="evidence" value="ECO:0007669"/>
    <property type="project" value="UniProtKB-UniRule"/>
</dbReference>
<dbReference type="GO" id="GO:0008654">
    <property type="term" value="P:phospholipid biosynthetic process"/>
    <property type="evidence" value="ECO:0007669"/>
    <property type="project" value="UniProtKB-KW"/>
</dbReference>
<dbReference type="Gene3D" id="3.40.718.10">
    <property type="entry name" value="Isopropylmalate Dehydrogenase"/>
    <property type="match status" value="1"/>
</dbReference>
<dbReference type="HAMAP" id="MF_00019">
    <property type="entry name" value="PlsX"/>
    <property type="match status" value="1"/>
</dbReference>
<dbReference type="InterPro" id="IPR003664">
    <property type="entry name" value="FA_synthesis"/>
</dbReference>
<dbReference type="InterPro" id="IPR012281">
    <property type="entry name" value="Phospholipid_synth_PlsX-like"/>
</dbReference>
<dbReference type="NCBIfam" id="TIGR00182">
    <property type="entry name" value="plsX"/>
    <property type="match status" value="1"/>
</dbReference>
<dbReference type="PANTHER" id="PTHR30100">
    <property type="entry name" value="FATTY ACID/PHOSPHOLIPID SYNTHESIS PROTEIN PLSX"/>
    <property type="match status" value="1"/>
</dbReference>
<dbReference type="PANTHER" id="PTHR30100:SF1">
    <property type="entry name" value="PHOSPHATE ACYLTRANSFERASE"/>
    <property type="match status" value="1"/>
</dbReference>
<dbReference type="Pfam" id="PF02504">
    <property type="entry name" value="FA_synthesis"/>
    <property type="match status" value="1"/>
</dbReference>
<dbReference type="PIRSF" id="PIRSF002465">
    <property type="entry name" value="Phsphlp_syn_PlsX"/>
    <property type="match status" value="1"/>
</dbReference>
<dbReference type="SUPFAM" id="SSF53659">
    <property type="entry name" value="Isocitrate/Isopropylmalate dehydrogenase-like"/>
    <property type="match status" value="1"/>
</dbReference>
<name>PLSX_COXBN</name>
<proteinExistence type="inferred from homology"/>
<gene>
    <name evidence="1" type="primary">plsX</name>
    <name type="ordered locus">CBUD_1584</name>
</gene>
<keyword id="KW-0963">Cytoplasm</keyword>
<keyword id="KW-0444">Lipid biosynthesis</keyword>
<keyword id="KW-0443">Lipid metabolism</keyword>
<keyword id="KW-0594">Phospholipid biosynthesis</keyword>
<keyword id="KW-1208">Phospholipid metabolism</keyword>
<keyword id="KW-0808">Transferase</keyword>
<comment type="function">
    <text evidence="1">Catalyzes the reversible formation of acyl-phosphate (acyl-PO(4)) from acyl-[acyl-carrier-protein] (acyl-ACP). This enzyme utilizes acyl-ACP as fatty acyl donor, but not acyl-CoA.</text>
</comment>
<comment type="catalytic activity">
    <reaction evidence="1">
        <text>a fatty acyl-[ACP] + phosphate = an acyl phosphate + holo-[ACP]</text>
        <dbReference type="Rhea" id="RHEA:42292"/>
        <dbReference type="Rhea" id="RHEA-COMP:9685"/>
        <dbReference type="Rhea" id="RHEA-COMP:14125"/>
        <dbReference type="ChEBI" id="CHEBI:43474"/>
        <dbReference type="ChEBI" id="CHEBI:59918"/>
        <dbReference type="ChEBI" id="CHEBI:64479"/>
        <dbReference type="ChEBI" id="CHEBI:138651"/>
        <dbReference type="EC" id="2.3.1.274"/>
    </reaction>
</comment>
<comment type="pathway">
    <text evidence="1">Lipid metabolism; phospholipid metabolism.</text>
</comment>
<comment type="subunit">
    <text evidence="1">Homodimer. Probably interacts with PlsY.</text>
</comment>
<comment type="subcellular location">
    <subcellularLocation>
        <location evidence="1">Cytoplasm</location>
    </subcellularLocation>
    <text evidence="1">Associated with the membrane possibly through PlsY.</text>
</comment>
<comment type="similarity">
    <text evidence="1">Belongs to the PlsX family.</text>
</comment>
<protein>
    <recommendedName>
        <fullName evidence="1">Phosphate acyltransferase</fullName>
        <ecNumber evidence="1">2.3.1.274</ecNumber>
    </recommendedName>
    <alternativeName>
        <fullName evidence="1">Acyl-ACP phosphotransacylase</fullName>
    </alternativeName>
    <alternativeName>
        <fullName evidence="1">Acyl-[acyl-carrier-protein]--phosphate acyltransferase</fullName>
    </alternativeName>
    <alternativeName>
        <fullName evidence="1">Phosphate-acyl-ACP acyltransferase</fullName>
    </alternativeName>
</protein>
<accession>A9KEA2</accession>
<evidence type="ECO:0000255" key="1">
    <source>
        <dbReference type="HAMAP-Rule" id="MF_00019"/>
    </source>
</evidence>